<accession>Q74JB4</accession>
<sequence>MKRLWVTGYRSYELGVFSDKDPKLTVIKYALSNYLKSLLEEGKIDWVISGANLGTEQWGLETAISLQNDYSVHTALMTPYLEFSKEWNDSNQMKYQNLTEQVDFTASTSDYPYMRPVQLKNYQNFMLEHTDRALLLYDPEHPGKTKYDYEAIKKYQEKSDYPLDIIDFYDLQEAAEEYEENHRKNFY</sequence>
<proteinExistence type="inferred from homology"/>
<organism>
    <name type="scientific">Lactobacillus johnsonii (strain CNCM I-12250 / La1 / NCC 533)</name>
    <dbReference type="NCBI Taxonomy" id="257314"/>
    <lineage>
        <taxon>Bacteria</taxon>
        <taxon>Bacillati</taxon>
        <taxon>Bacillota</taxon>
        <taxon>Bacilli</taxon>
        <taxon>Lactobacillales</taxon>
        <taxon>Lactobacillaceae</taxon>
        <taxon>Lactobacillus</taxon>
    </lineage>
</organism>
<comment type="similarity">
    <text evidence="1">Belongs to the UPF0398 family.</text>
</comment>
<dbReference type="EMBL" id="AE017198">
    <property type="protein sequence ID" value="AAS09016.1"/>
    <property type="molecule type" value="Genomic_DNA"/>
</dbReference>
<dbReference type="RefSeq" id="WP_011162026.1">
    <property type="nucleotide sequence ID" value="NC_005362.1"/>
</dbReference>
<dbReference type="SMR" id="Q74JB4"/>
<dbReference type="KEGG" id="ljo:LJ_1195"/>
<dbReference type="PATRIC" id="fig|257314.6.peg.1061"/>
<dbReference type="eggNOG" id="COG4474">
    <property type="taxonomic scope" value="Bacteria"/>
</dbReference>
<dbReference type="HOGENOM" id="CLU_105319_0_0_9"/>
<dbReference type="Proteomes" id="UP000000581">
    <property type="component" value="Chromosome"/>
</dbReference>
<dbReference type="Gene3D" id="3.40.50.450">
    <property type="match status" value="1"/>
</dbReference>
<dbReference type="HAMAP" id="MF_01575">
    <property type="entry name" value="UPF0398"/>
    <property type="match status" value="1"/>
</dbReference>
<dbReference type="InterPro" id="IPR010697">
    <property type="entry name" value="YspA"/>
</dbReference>
<dbReference type="NCBIfam" id="NF010181">
    <property type="entry name" value="PRK13660.1"/>
    <property type="match status" value="1"/>
</dbReference>
<dbReference type="PANTHER" id="PTHR38440:SF1">
    <property type="entry name" value="UPF0398 PROTEIN SPR0331"/>
    <property type="match status" value="1"/>
</dbReference>
<dbReference type="PANTHER" id="PTHR38440">
    <property type="entry name" value="UPF0398 PROTEIN YPSA"/>
    <property type="match status" value="1"/>
</dbReference>
<dbReference type="Pfam" id="PF06908">
    <property type="entry name" value="YpsA"/>
    <property type="match status" value="1"/>
</dbReference>
<dbReference type="PIRSF" id="PIRSF021290">
    <property type="entry name" value="DUF1273"/>
    <property type="match status" value="1"/>
</dbReference>
<dbReference type="SUPFAM" id="SSF102405">
    <property type="entry name" value="MCP/YpsA-like"/>
    <property type="match status" value="1"/>
</dbReference>
<protein>
    <recommendedName>
        <fullName evidence="1">UPF0398 protein LJ_1195</fullName>
    </recommendedName>
</protein>
<reference key="1">
    <citation type="journal article" date="2004" name="Proc. Natl. Acad. Sci. U.S.A.">
        <title>The genome sequence of the probiotic intestinal bacterium Lactobacillus johnsonii NCC 533.</title>
        <authorList>
            <person name="Pridmore R.D."/>
            <person name="Berger B."/>
            <person name="Desiere F."/>
            <person name="Vilanova D."/>
            <person name="Barretto C."/>
            <person name="Pittet A.-C."/>
            <person name="Zwahlen M.-C."/>
            <person name="Rouvet M."/>
            <person name="Altermann E."/>
            <person name="Barrangou R."/>
            <person name="Mollet B."/>
            <person name="Mercenier A."/>
            <person name="Klaenhammer T."/>
            <person name="Arigoni F."/>
            <person name="Schell M.A."/>
        </authorList>
    </citation>
    <scope>NUCLEOTIDE SEQUENCE [LARGE SCALE GENOMIC DNA]</scope>
    <source>
        <strain>CNCM I-1225 / La1 / NCC 533</strain>
    </source>
</reference>
<feature type="chain" id="PRO_0000267159" description="UPF0398 protein LJ_1195">
    <location>
        <begin position="1"/>
        <end position="187"/>
    </location>
</feature>
<name>Y1195_LACJO</name>
<evidence type="ECO:0000255" key="1">
    <source>
        <dbReference type="HAMAP-Rule" id="MF_01575"/>
    </source>
</evidence>
<gene>
    <name type="ordered locus">LJ_1195</name>
</gene>